<keyword id="KW-0378">Hydrolase</keyword>
<keyword id="KW-0479">Metal-binding</keyword>
<keyword id="KW-0862">Zinc</keyword>
<organism>
    <name type="scientific">Prochlorococcus marinus subsp. pastoris (strain CCMP1986 / NIES-2087 / MED4)</name>
    <dbReference type="NCBI Taxonomy" id="59919"/>
    <lineage>
        <taxon>Bacteria</taxon>
        <taxon>Bacillati</taxon>
        <taxon>Cyanobacteriota</taxon>
        <taxon>Cyanophyceae</taxon>
        <taxon>Synechococcales</taxon>
        <taxon>Prochlorococcaceae</taxon>
        <taxon>Prochlorococcus</taxon>
    </lineage>
</organism>
<feature type="chain" id="PRO_0000216880" description="Probable aspartoacylase">
    <location>
        <begin position="1"/>
        <end position="295"/>
    </location>
</feature>
<feature type="binding site" evidence="1">
    <location>
        <position position="13"/>
    </location>
    <ligand>
        <name>Zn(2+)</name>
        <dbReference type="ChEBI" id="CHEBI:29105"/>
    </ligand>
</feature>
<feature type="binding site" evidence="1">
    <location>
        <position position="16"/>
    </location>
    <ligand>
        <name>Zn(2+)</name>
        <dbReference type="ChEBI" id="CHEBI:29105"/>
    </ligand>
</feature>
<feature type="binding site" evidence="1">
    <location>
        <position position="54"/>
    </location>
    <ligand>
        <name>substrate</name>
    </ligand>
</feature>
<feature type="binding site" evidence="1">
    <location>
        <begin position="61"/>
        <end position="62"/>
    </location>
    <ligand>
        <name>substrate</name>
    </ligand>
</feature>
<feature type="binding site" evidence="1">
    <location>
        <position position="100"/>
    </location>
    <ligand>
        <name>Zn(2+)</name>
        <dbReference type="ChEBI" id="CHEBI:29105"/>
    </ligand>
</feature>
<feature type="binding site" evidence="1">
    <location>
        <position position="158"/>
    </location>
    <ligand>
        <name>substrate</name>
    </ligand>
</feature>
<feature type="binding site" evidence="1">
    <location>
        <position position="268"/>
    </location>
    <ligand>
        <name>substrate</name>
    </ligand>
</feature>
<comment type="catalytic activity">
    <reaction evidence="1">
        <text>an N-acyl-L-aspartate + H2O = a carboxylate + L-aspartate</text>
        <dbReference type="Rhea" id="RHEA:10872"/>
        <dbReference type="ChEBI" id="CHEBI:15377"/>
        <dbReference type="ChEBI" id="CHEBI:29067"/>
        <dbReference type="ChEBI" id="CHEBI:29991"/>
        <dbReference type="ChEBI" id="CHEBI:58497"/>
        <dbReference type="EC" id="3.5.1.15"/>
    </reaction>
</comment>
<comment type="cofactor">
    <cofactor evidence="1">
        <name>Zn(2+)</name>
        <dbReference type="ChEBI" id="CHEBI:29105"/>
    </cofactor>
    <text evidence="1">Binds 1 zinc ion per subunit.</text>
</comment>
<comment type="similarity">
    <text evidence="1">Belongs to the AspA/AstE family. Aspartoacylase subfamily.</text>
</comment>
<reference key="1">
    <citation type="journal article" date="2003" name="Nature">
        <title>Genome divergence in two Prochlorococcus ecotypes reflects oceanic niche differentiation.</title>
        <authorList>
            <person name="Rocap G."/>
            <person name="Larimer F.W."/>
            <person name="Lamerdin J.E."/>
            <person name="Malfatti S."/>
            <person name="Chain P."/>
            <person name="Ahlgren N.A."/>
            <person name="Arellano A."/>
            <person name="Coleman M."/>
            <person name="Hauser L."/>
            <person name="Hess W.R."/>
            <person name="Johnson Z.I."/>
            <person name="Land M.L."/>
            <person name="Lindell D."/>
            <person name="Post A.F."/>
            <person name="Regala W."/>
            <person name="Shah M."/>
            <person name="Shaw S.L."/>
            <person name="Steglich C."/>
            <person name="Sullivan M.B."/>
            <person name="Ting C.S."/>
            <person name="Tolonen A."/>
            <person name="Webb E.A."/>
            <person name="Zinser E.R."/>
            <person name="Chisholm S.W."/>
        </authorList>
    </citation>
    <scope>NUCLEOTIDE SEQUENCE [LARGE SCALE GENOMIC DNA]</scope>
    <source>
        <strain>CCMP1986 / NIES-2087 / MED4</strain>
    </source>
</reference>
<protein>
    <recommendedName>
        <fullName evidence="1">Probable aspartoacylase</fullName>
        <ecNumber evidence="1">3.5.1.15</ecNumber>
    </recommendedName>
</protein>
<name>ASPA_PROMP</name>
<sequence>MTLKKILIVSGTHGNEINPVWAINQFNKQFKTIDKNIEYKFVIGNPLAYERGCRYIDNDLNRSFTSIQDNSIYETNRANFLVEKFGFNGSEPCDVAIDLHTTTANMGTSIVMYGRRMKDFCLAALLQHKFGLPIYLHEKDLKQTGFLVEAWPCGLVLEIGSVAQNFYDPKIINRFLIIISSLRDEINKLKNNQIRLPKDLFVHVHQGSIDYPRDKNGNINALIHPERINQDWKPIKKDAPLFMDMEGKTKTYADEDTIWPVFIGEVAYKEKNIAMSFTKKEVVSVSDQMYEEFFS</sequence>
<accession>P59830</accession>
<dbReference type="EC" id="3.5.1.15" evidence="1"/>
<dbReference type="EMBL" id="BX548174">
    <property type="protein sequence ID" value="CAE18681.1"/>
    <property type="molecule type" value="Genomic_DNA"/>
</dbReference>
<dbReference type="RefSeq" id="WP_011131861.1">
    <property type="nucleotide sequence ID" value="NC_005072.1"/>
</dbReference>
<dbReference type="SMR" id="P59830"/>
<dbReference type="STRING" id="59919.PMM0222"/>
<dbReference type="KEGG" id="pmm:PMM0222"/>
<dbReference type="eggNOG" id="COG2988">
    <property type="taxonomic scope" value="Bacteria"/>
</dbReference>
<dbReference type="HOGENOM" id="CLU_083292_0_0_3"/>
<dbReference type="OrthoDB" id="531770at2"/>
<dbReference type="Proteomes" id="UP000001026">
    <property type="component" value="Chromosome"/>
</dbReference>
<dbReference type="GO" id="GO:0005829">
    <property type="term" value="C:cytosol"/>
    <property type="evidence" value="ECO:0007669"/>
    <property type="project" value="TreeGrafter"/>
</dbReference>
<dbReference type="GO" id="GO:0019807">
    <property type="term" value="F:aspartoacylase activity"/>
    <property type="evidence" value="ECO:0007669"/>
    <property type="project" value="UniProtKB-UniRule"/>
</dbReference>
<dbReference type="GO" id="GO:0016788">
    <property type="term" value="F:hydrolase activity, acting on ester bonds"/>
    <property type="evidence" value="ECO:0007669"/>
    <property type="project" value="InterPro"/>
</dbReference>
<dbReference type="GO" id="GO:0008270">
    <property type="term" value="F:zinc ion binding"/>
    <property type="evidence" value="ECO:0007669"/>
    <property type="project" value="UniProtKB-UniRule"/>
</dbReference>
<dbReference type="Gene3D" id="2.20.25.160">
    <property type="match status" value="1"/>
</dbReference>
<dbReference type="Gene3D" id="3.40.630.10">
    <property type="entry name" value="Zn peptidases"/>
    <property type="match status" value="1"/>
</dbReference>
<dbReference type="HAMAP" id="MF_00704">
    <property type="entry name" value="Aspartoacylase"/>
    <property type="match status" value="1"/>
</dbReference>
<dbReference type="InterPro" id="IPR050178">
    <property type="entry name" value="AspA/AstE_fam"/>
</dbReference>
<dbReference type="InterPro" id="IPR016708">
    <property type="entry name" value="Aspartoacylase"/>
</dbReference>
<dbReference type="InterPro" id="IPR055438">
    <property type="entry name" value="AstE_AspA_cat"/>
</dbReference>
<dbReference type="InterPro" id="IPR007036">
    <property type="entry name" value="Aste_AspA_hybrid_dom"/>
</dbReference>
<dbReference type="NCBIfam" id="NF002601">
    <property type="entry name" value="PRK02259.1"/>
    <property type="match status" value="1"/>
</dbReference>
<dbReference type="PANTHER" id="PTHR15162">
    <property type="entry name" value="ASPARTOACYLASE"/>
    <property type="match status" value="1"/>
</dbReference>
<dbReference type="PANTHER" id="PTHR15162:SF7">
    <property type="entry name" value="SUCCINYLGLUTAMATE DESUCCINYLASE"/>
    <property type="match status" value="1"/>
</dbReference>
<dbReference type="Pfam" id="PF24827">
    <property type="entry name" value="AstE_AspA_cat"/>
    <property type="match status" value="1"/>
</dbReference>
<dbReference type="Pfam" id="PF04952">
    <property type="entry name" value="AstE_AspA_hybrid"/>
    <property type="match status" value="1"/>
</dbReference>
<dbReference type="PIRSF" id="PIRSF018001">
    <property type="entry name" value="Aspartoacylase"/>
    <property type="match status" value="1"/>
</dbReference>
<dbReference type="SUPFAM" id="SSF53187">
    <property type="entry name" value="Zn-dependent exopeptidases"/>
    <property type="match status" value="1"/>
</dbReference>
<gene>
    <name type="ordered locus">PMM0222</name>
</gene>
<evidence type="ECO:0000255" key="1">
    <source>
        <dbReference type="HAMAP-Rule" id="MF_00704"/>
    </source>
</evidence>
<proteinExistence type="inferred from homology"/>